<accession>Q4QNB7</accession>
<organism>
    <name type="scientific">Haemophilus influenzae (strain 86-028NP)</name>
    <dbReference type="NCBI Taxonomy" id="281310"/>
    <lineage>
        <taxon>Bacteria</taxon>
        <taxon>Pseudomonadati</taxon>
        <taxon>Pseudomonadota</taxon>
        <taxon>Gammaproteobacteria</taxon>
        <taxon>Pasteurellales</taxon>
        <taxon>Pasteurellaceae</taxon>
        <taxon>Haemophilus</taxon>
    </lineage>
</organism>
<proteinExistence type="inferred from homology"/>
<keyword id="KW-0997">Cell inner membrane</keyword>
<keyword id="KW-1003">Cell membrane</keyword>
<keyword id="KW-0143">Chaperone</keyword>
<keyword id="KW-1015">Disulfide bond</keyword>
<keyword id="KW-0249">Electron transport</keyword>
<keyword id="KW-0472">Membrane</keyword>
<keyword id="KW-0560">Oxidoreductase</keyword>
<keyword id="KW-0676">Redox-active center</keyword>
<keyword id="KW-0812">Transmembrane</keyword>
<keyword id="KW-1133">Transmembrane helix</keyword>
<keyword id="KW-0813">Transport</keyword>
<protein>
    <recommendedName>
        <fullName evidence="1">Disulfide bond formation protein B</fullName>
    </recommendedName>
    <alternativeName>
        <fullName evidence="1">Disulfide oxidoreductase</fullName>
    </alternativeName>
</protein>
<name>DSBB_HAEI8</name>
<dbReference type="EMBL" id="CP000057">
    <property type="protein sequence ID" value="AAX87480.1"/>
    <property type="molecule type" value="Genomic_DNA"/>
</dbReference>
<dbReference type="RefSeq" id="WP_011272043.1">
    <property type="nucleotide sequence ID" value="NC_007146.2"/>
</dbReference>
<dbReference type="SMR" id="Q4QNB7"/>
<dbReference type="GeneID" id="93219441"/>
<dbReference type="KEGG" id="hit:NTHI0552"/>
<dbReference type="HOGENOM" id="CLU_098660_2_0_6"/>
<dbReference type="Proteomes" id="UP000002525">
    <property type="component" value="Chromosome"/>
</dbReference>
<dbReference type="GO" id="GO:0005886">
    <property type="term" value="C:plasma membrane"/>
    <property type="evidence" value="ECO:0007669"/>
    <property type="project" value="UniProtKB-SubCell"/>
</dbReference>
<dbReference type="GO" id="GO:0009055">
    <property type="term" value="F:electron transfer activity"/>
    <property type="evidence" value="ECO:0007669"/>
    <property type="project" value="UniProtKB-UniRule"/>
</dbReference>
<dbReference type="GO" id="GO:0015035">
    <property type="term" value="F:protein-disulfide reductase activity"/>
    <property type="evidence" value="ECO:0007669"/>
    <property type="project" value="UniProtKB-UniRule"/>
</dbReference>
<dbReference type="GO" id="GO:0006457">
    <property type="term" value="P:protein folding"/>
    <property type="evidence" value="ECO:0007669"/>
    <property type="project" value="InterPro"/>
</dbReference>
<dbReference type="FunFam" id="1.20.1550.10:FF:000008">
    <property type="entry name" value="Disulfide bond formation protein B"/>
    <property type="match status" value="1"/>
</dbReference>
<dbReference type="Gene3D" id="1.20.1550.10">
    <property type="entry name" value="DsbB-like"/>
    <property type="match status" value="1"/>
</dbReference>
<dbReference type="HAMAP" id="MF_00286">
    <property type="entry name" value="DsbB"/>
    <property type="match status" value="1"/>
</dbReference>
<dbReference type="InterPro" id="IPR003752">
    <property type="entry name" value="DiS_bond_form_DsbB/BdbC"/>
</dbReference>
<dbReference type="InterPro" id="IPR022920">
    <property type="entry name" value="Disulphide_bond_form_DsbB"/>
</dbReference>
<dbReference type="InterPro" id="IPR050183">
    <property type="entry name" value="DsbB"/>
</dbReference>
<dbReference type="InterPro" id="IPR023380">
    <property type="entry name" value="DsbB-like_sf"/>
</dbReference>
<dbReference type="NCBIfam" id="NF002485">
    <property type="entry name" value="PRK01749.1"/>
    <property type="match status" value="1"/>
</dbReference>
<dbReference type="PANTHER" id="PTHR36570">
    <property type="entry name" value="DISULFIDE BOND FORMATION PROTEIN B"/>
    <property type="match status" value="1"/>
</dbReference>
<dbReference type="PANTHER" id="PTHR36570:SF2">
    <property type="entry name" value="DISULFIDE BOND FORMATION PROTEIN B"/>
    <property type="match status" value="1"/>
</dbReference>
<dbReference type="Pfam" id="PF02600">
    <property type="entry name" value="DsbB"/>
    <property type="match status" value="1"/>
</dbReference>
<dbReference type="SUPFAM" id="SSF158442">
    <property type="entry name" value="DsbB-like"/>
    <property type="match status" value="1"/>
</dbReference>
<reference key="1">
    <citation type="journal article" date="2005" name="J. Bacteriol.">
        <title>Genomic sequence of an otitis media isolate of nontypeable Haemophilus influenzae: comparative study with H. influenzae serotype d, strain KW20.</title>
        <authorList>
            <person name="Harrison A."/>
            <person name="Dyer D.W."/>
            <person name="Gillaspy A."/>
            <person name="Ray W.C."/>
            <person name="Mungur R."/>
            <person name="Carson M.B."/>
            <person name="Zhong H."/>
            <person name="Gipson J."/>
            <person name="Gipson M."/>
            <person name="Johnson L.S."/>
            <person name="Lewis L."/>
            <person name="Bakaletz L.O."/>
            <person name="Munson R.S. Jr."/>
        </authorList>
    </citation>
    <scope>NUCLEOTIDE SEQUENCE [LARGE SCALE GENOMIC DNA]</scope>
    <source>
        <strain>86-028NP</strain>
    </source>
</reference>
<sequence>MLALLKQFSEKRFVWFLLAFSSLALESTALYFQYGMGLQPCVLCVYERLAMIGLFVAGIIALLQPLAFILRLIALALGLFSSIKGLLISFRHLDLQMNPAPWKQCEFIPNFPETLPFHQWFPFIFNPTGSCNESQWSLFGLTMVQWLVVIFSLYVVILTLLLIAQVIKTRKQRRLFN</sequence>
<feature type="chain" id="PRO_0000298360" description="Disulfide bond formation protein B">
    <location>
        <begin position="1"/>
        <end position="177"/>
    </location>
</feature>
<feature type="topological domain" description="Cytoplasmic" evidence="1">
    <location>
        <begin position="1"/>
        <end position="14"/>
    </location>
</feature>
<feature type="transmembrane region" description="Helical" evidence="1">
    <location>
        <begin position="15"/>
        <end position="31"/>
    </location>
</feature>
<feature type="topological domain" description="Periplasmic" evidence="1">
    <location>
        <begin position="32"/>
        <end position="49"/>
    </location>
</feature>
<feature type="transmembrane region" description="Helical" evidence="1">
    <location>
        <begin position="50"/>
        <end position="65"/>
    </location>
</feature>
<feature type="topological domain" description="Cytoplasmic" evidence="1">
    <location>
        <begin position="66"/>
        <end position="72"/>
    </location>
</feature>
<feature type="transmembrane region" description="Helical" evidence="1">
    <location>
        <begin position="73"/>
        <end position="90"/>
    </location>
</feature>
<feature type="topological domain" description="Periplasmic" evidence="1">
    <location>
        <begin position="91"/>
        <end position="145"/>
    </location>
</feature>
<feature type="transmembrane region" description="Helical" evidence="1">
    <location>
        <begin position="146"/>
        <end position="164"/>
    </location>
</feature>
<feature type="topological domain" description="Cytoplasmic" evidence="1">
    <location>
        <begin position="165"/>
        <end position="177"/>
    </location>
</feature>
<feature type="disulfide bond" description="Redox-active" evidence="1">
    <location>
        <begin position="41"/>
        <end position="44"/>
    </location>
</feature>
<feature type="disulfide bond" description="Redox-active" evidence="1">
    <location>
        <begin position="105"/>
        <end position="131"/>
    </location>
</feature>
<comment type="function">
    <text evidence="1">Required for disulfide bond formation in some periplasmic proteins. Acts by oxidizing the DsbA protein.</text>
</comment>
<comment type="subcellular location">
    <subcellularLocation>
        <location evidence="1">Cell inner membrane</location>
        <topology evidence="1">Multi-pass membrane protein</topology>
    </subcellularLocation>
</comment>
<comment type="similarity">
    <text evidence="1">Belongs to the DsbB family.</text>
</comment>
<evidence type="ECO:0000255" key="1">
    <source>
        <dbReference type="HAMAP-Rule" id="MF_00286"/>
    </source>
</evidence>
<gene>
    <name evidence="1" type="primary">dsbB</name>
    <name type="ordered locus">NTHI0552</name>
</gene>